<accession>Q4VDN5</accession>
<name>AB3CA_FELCA</name>
<comment type="function">
    <text evidence="2 7">DNA deaminase (cytidine deaminase) which acts as an inhibitor of retrovirus replication and retrotransposon mobility via deaminase-dependent and -independent mechanisms (By similarity). Selectively targets single-stranded DNA and does not deaminate double-stranded DNA or single- or double-stranded RNA (By similarity). Does not reduce infectivity of foamy feline virus, feline immunodeficiency virus or feline leukemia virus (PubMed:18315870).</text>
</comment>
<comment type="catalytic activity">
    <reaction evidence="1">
        <text>a 2'-deoxycytidine in single-stranded DNA + H2O + H(+) = a 2'-deoxyuridine in single-stranded DNA + NH4(+)</text>
        <dbReference type="Rhea" id="RHEA:50948"/>
        <dbReference type="Rhea" id="RHEA-COMP:12846"/>
        <dbReference type="Rhea" id="RHEA-COMP:12847"/>
        <dbReference type="ChEBI" id="CHEBI:15377"/>
        <dbReference type="ChEBI" id="CHEBI:15378"/>
        <dbReference type="ChEBI" id="CHEBI:28938"/>
        <dbReference type="ChEBI" id="CHEBI:85452"/>
        <dbReference type="ChEBI" id="CHEBI:133902"/>
        <dbReference type="EC" id="3.5.4.38"/>
    </reaction>
</comment>
<comment type="cofactor">
    <cofactor evidence="3">
        <name>Zn(2+)</name>
        <dbReference type="ChEBI" id="CHEBI:29105"/>
    </cofactor>
</comment>
<comment type="subunit">
    <text evidence="6 9">(Microbial infection) Interacts with feline foamy virus protein Bet (PubMed:15911774). This interaction does not induce APOBEC3Ca degradation but prevents its dimerization and incorporation into the virion (Probable).</text>
</comment>
<comment type="subcellular location">
    <subcellularLocation>
        <location evidence="4">Nucleus</location>
    </subcellularLocation>
    <subcellularLocation>
        <location evidence="4">Cytoplasm</location>
    </subcellularLocation>
</comment>
<comment type="miscellaneous">
    <text evidence="7">One of 3 related APOBEC3C genes in cat, APOBEC3Ca, APOBEC3Cb and APOBEC3Cc, which are likely to have been generated after two consecutive gene duplications.</text>
</comment>
<comment type="miscellaneous">
    <text evidence="6 7">Potent inhibitor of Bet-deficient foamy feline virus (PubMed:15911774, PubMed:18315870). Does not inhibit Vif-deficient feline immunodeficiency virus (PubMed:18315870).</text>
</comment>
<comment type="similarity">
    <text evidence="8">Belongs to the cytidine and deoxycytidylate deaminase family.</text>
</comment>
<organism evidence="10">
    <name type="scientific">Felis catus</name>
    <name type="common">Cat</name>
    <name type="synonym">Felis silvestris catus</name>
    <dbReference type="NCBI Taxonomy" id="9685"/>
    <lineage>
        <taxon>Eukaryota</taxon>
        <taxon>Metazoa</taxon>
        <taxon>Chordata</taxon>
        <taxon>Craniata</taxon>
        <taxon>Vertebrata</taxon>
        <taxon>Euteleostomi</taxon>
        <taxon>Mammalia</taxon>
        <taxon>Eutheria</taxon>
        <taxon>Laurasiatheria</taxon>
        <taxon>Carnivora</taxon>
        <taxon>Feliformia</taxon>
        <taxon>Felidae</taxon>
        <taxon>Felinae</taxon>
        <taxon>Felis</taxon>
    </lineage>
</organism>
<reference evidence="10" key="1">
    <citation type="journal article" date="2005" name="Proc. Natl. Acad. Sci. U.S.A.">
        <title>The antiretroviral activity of APOBEC3 is inhibited by the foamy virus accessory Bet protein.</title>
        <authorList>
            <person name="Loechelt M."/>
            <person name="Romen F."/>
            <person name="Bastone P."/>
            <person name="Muckenfuss H."/>
            <person name="Kirchner N."/>
            <person name="Kim Y.B."/>
            <person name="Truyen U."/>
            <person name="Rosler U."/>
            <person name="Battenberg M."/>
            <person name="Saib A."/>
            <person name="Flory E."/>
            <person name="Cichutek K."/>
            <person name="Muenk C."/>
        </authorList>
    </citation>
    <scope>NUCLEOTIDE SEQUENCE [MRNA]</scope>
    <scope>INTERACTION WITH FELINE FOAMY VIRUS PROTEIN BET</scope>
    <scope>ACTIVITY AGAINST BET-DEFICIENT FELINE FOAMY VIRUS</scope>
</reference>
<reference evidence="11" key="2">
    <citation type="journal article" date="2008" name="Genome Biol.">
        <title>Functions, structure, and read-through alternative splicing of feline APOBEC3 genes.</title>
        <authorList>
            <person name="Munk C."/>
            <person name="Beck T."/>
            <person name="Zielonka J."/>
            <person name="Hotz-Wagenblatt A."/>
            <person name="Chareza S."/>
            <person name="Battenberg M."/>
            <person name="Thielebein J."/>
            <person name="Cichutek K."/>
            <person name="Bravo I.G."/>
            <person name="O'Brien S.J."/>
            <person name="Lochelt M."/>
            <person name="Yuhki N."/>
        </authorList>
    </citation>
    <scope>NUCLEOTIDE SEQUENCE [GENOMIC DNA]</scope>
    <scope>FUNCTION</scope>
    <scope>ACTIVITY AGAINST BET-DEFICIENT FELINE FOAMY VIRUS</scope>
</reference>
<proteinExistence type="evidence at protein level"/>
<protein>
    <recommendedName>
        <fullName evidence="8">DNA dC-&gt;dU-editing enzyme APOBEC-3Ca</fullName>
        <ecNumber evidence="1">3.5.4.38</ecNumber>
    </recommendedName>
    <alternativeName>
        <fullName evidence="11">Antiviral cytidine deaminase A3Ca</fullName>
    </alternativeName>
</protein>
<gene>
    <name evidence="11" type="primary">APOBEC3CA</name>
</gene>
<feature type="chain" id="PRO_0000450521" description="DNA dC-&gt;dU-editing enzyme APOBEC-3Ca">
    <location>
        <begin position="1"/>
        <end position="192"/>
    </location>
</feature>
<feature type="domain" description="CMP/dCMP-type deaminase" evidence="5">
    <location>
        <begin position="15"/>
        <end position="141"/>
    </location>
</feature>
<feature type="active site" description="Proton donor" evidence="5">
    <location>
        <position position="71"/>
    </location>
</feature>
<feature type="binding site" evidence="5">
    <location>
        <position position="69"/>
    </location>
    <ligand>
        <name>Zn(2+)</name>
        <dbReference type="ChEBI" id="CHEBI:29105"/>
        <note>catalytic</note>
    </ligand>
</feature>
<feature type="binding site" evidence="5">
    <location>
        <position position="100"/>
    </location>
    <ligand>
        <name>Zn(2+)</name>
        <dbReference type="ChEBI" id="CHEBI:29105"/>
        <note>catalytic</note>
    </ligand>
</feature>
<feature type="binding site" evidence="5">
    <location>
        <position position="103"/>
    </location>
    <ligand>
        <name>Zn(2+)</name>
        <dbReference type="ChEBI" id="CHEBI:29105"/>
        <note>catalytic</note>
    </ligand>
</feature>
<keyword id="KW-0051">Antiviral defense</keyword>
<keyword id="KW-0963">Cytoplasm</keyword>
<keyword id="KW-0378">Hydrolase</keyword>
<keyword id="KW-0479">Metal-binding</keyword>
<keyword id="KW-0539">Nucleus</keyword>
<keyword id="KW-1185">Reference proteome</keyword>
<keyword id="KW-0862">Zinc</keyword>
<sequence length="192" mass="23500">MEPWRPSPRNPMDRIDPNTFRFHFPNLLYASGRKLCYLCFQVETEDYFSCDDSDRGVFRNKVHPWARCHAEQCFLSWFRDQYPYRDEYYNVTWFLSWSPCPTCAEEVVEFLEEYRNLTLSIFTSRLYYFWDPNYQEGLCKLWDAGVQLDIMSCDDFKHCWDNFVDHKGMRFQRRNLLKDYDFLAAELQEILR</sequence>
<dbReference type="EC" id="3.5.4.38" evidence="1"/>
<dbReference type="EMBL" id="AY971954">
    <property type="protein sequence ID" value="AAY40463.1"/>
    <property type="molecule type" value="mRNA"/>
</dbReference>
<dbReference type="EMBL" id="EU109281">
    <property type="protein sequence ID" value="ABW83272.1"/>
    <property type="molecule type" value="Genomic_DNA"/>
</dbReference>
<dbReference type="SMR" id="Q4VDN5"/>
<dbReference type="InParanoid" id="Q4VDN5"/>
<dbReference type="OrthoDB" id="9445293at2759"/>
<dbReference type="Proteomes" id="UP000011712">
    <property type="component" value="Unplaced"/>
</dbReference>
<dbReference type="GO" id="GO:0005737">
    <property type="term" value="C:cytoplasm"/>
    <property type="evidence" value="ECO:0000318"/>
    <property type="project" value="GO_Central"/>
</dbReference>
<dbReference type="GO" id="GO:0005634">
    <property type="term" value="C:nucleus"/>
    <property type="evidence" value="ECO:0000318"/>
    <property type="project" value="GO_Central"/>
</dbReference>
<dbReference type="GO" id="GO:0000932">
    <property type="term" value="C:P-body"/>
    <property type="evidence" value="ECO:0000318"/>
    <property type="project" value="GO_Central"/>
</dbReference>
<dbReference type="GO" id="GO:0004126">
    <property type="term" value="F:cytidine deaminase activity"/>
    <property type="evidence" value="ECO:0000318"/>
    <property type="project" value="GO_Central"/>
</dbReference>
<dbReference type="GO" id="GO:0003723">
    <property type="term" value="F:RNA binding"/>
    <property type="evidence" value="ECO:0000318"/>
    <property type="project" value="GO_Central"/>
</dbReference>
<dbReference type="GO" id="GO:0008270">
    <property type="term" value="F:zinc ion binding"/>
    <property type="evidence" value="ECO:0007669"/>
    <property type="project" value="InterPro"/>
</dbReference>
<dbReference type="GO" id="GO:0016554">
    <property type="term" value="P:cytidine to uridine editing"/>
    <property type="evidence" value="ECO:0000318"/>
    <property type="project" value="GO_Central"/>
</dbReference>
<dbReference type="GO" id="GO:0051607">
    <property type="term" value="P:defense response to virus"/>
    <property type="evidence" value="ECO:0000318"/>
    <property type="project" value="GO_Central"/>
</dbReference>
<dbReference type="GO" id="GO:0070383">
    <property type="term" value="P:DNA cytosine deamination"/>
    <property type="evidence" value="ECO:0000318"/>
    <property type="project" value="GO_Central"/>
</dbReference>
<dbReference type="GO" id="GO:0045869">
    <property type="term" value="P:negative regulation of single stranded viral RNA replication via double stranded DNA intermediate"/>
    <property type="evidence" value="ECO:0000318"/>
    <property type="project" value="GO_Central"/>
</dbReference>
<dbReference type="CDD" id="cd01283">
    <property type="entry name" value="cytidine_deaminase"/>
    <property type="match status" value="1"/>
</dbReference>
<dbReference type="Gene3D" id="3.40.140.10">
    <property type="entry name" value="Cytidine Deaminase, domain 2"/>
    <property type="match status" value="1"/>
</dbReference>
<dbReference type="InterPro" id="IPR016192">
    <property type="entry name" value="APOBEC/CMP_deaminase_Zn-bd"/>
</dbReference>
<dbReference type="InterPro" id="IPR050610">
    <property type="entry name" value="APOBEC_Cyt_Deaminase"/>
</dbReference>
<dbReference type="InterPro" id="IPR002125">
    <property type="entry name" value="CMP_dCMP_dom"/>
</dbReference>
<dbReference type="InterPro" id="IPR016193">
    <property type="entry name" value="Cytidine_deaminase-like"/>
</dbReference>
<dbReference type="PANTHER" id="PTHR13857:SF45">
    <property type="entry name" value="DNA DC-DU-EDITING ENZYME APOBEC-3F"/>
    <property type="match status" value="1"/>
</dbReference>
<dbReference type="PANTHER" id="PTHR13857">
    <property type="entry name" value="MRNA EDITING ENZYME"/>
    <property type="match status" value="1"/>
</dbReference>
<dbReference type="Pfam" id="PF18772">
    <property type="entry name" value="APOBEC2"/>
    <property type="match status" value="1"/>
</dbReference>
<dbReference type="SUPFAM" id="SSF53927">
    <property type="entry name" value="Cytidine deaminase-like"/>
    <property type="match status" value="1"/>
</dbReference>
<dbReference type="PROSITE" id="PS00903">
    <property type="entry name" value="CYT_DCMP_DEAMINASES_1"/>
    <property type="match status" value="1"/>
</dbReference>
<dbReference type="PROSITE" id="PS51747">
    <property type="entry name" value="CYT_DCMP_DEAMINASES_2"/>
    <property type="match status" value="1"/>
</dbReference>
<evidence type="ECO:0000250" key="1">
    <source>
        <dbReference type="UniProtKB" id="A9QA56"/>
    </source>
</evidence>
<evidence type="ECO:0000250" key="2">
    <source>
        <dbReference type="UniProtKB" id="P60705"/>
    </source>
</evidence>
<evidence type="ECO:0000250" key="3">
    <source>
        <dbReference type="UniProtKB" id="Q9GZX7"/>
    </source>
</evidence>
<evidence type="ECO:0000250" key="4">
    <source>
        <dbReference type="UniProtKB" id="Q9NRW3"/>
    </source>
</evidence>
<evidence type="ECO:0000255" key="5">
    <source>
        <dbReference type="PROSITE-ProRule" id="PRU01083"/>
    </source>
</evidence>
<evidence type="ECO:0000269" key="6">
    <source>
    </source>
</evidence>
<evidence type="ECO:0000269" key="7">
    <source>
    </source>
</evidence>
<evidence type="ECO:0000305" key="8"/>
<evidence type="ECO:0000305" key="9">
    <source>
    </source>
</evidence>
<evidence type="ECO:0000312" key="10">
    <source>
        <dbReference type="EMBL" id="AAY40463.1"/>
    </source>
</evidence>
<evidence type="ECO:0000312" key="11">
    <source>
        <dbReference type="EMBL" id="ABW83272.1"/>
    </source>
</evidence>